<protein>
    <recommendedName>
        <fullName evidence="1">Small ribosomal subunit protein uS15z</fullName>
    </recommendedName>
    <alternativeName>
        <fullName>40S ribosomal protein S13-1</fullName>
    </alternativeName>
</protein>
<reference key="1">
    <citation type="journal article" date="2000" name="Nature">
        <title>Sequence and analysis of chromosome 3 of the plant Arabidopsis thaliana.</title>
        <authorList>
            <person name="Salanoubat M."/>
            <person name="Lemcke K."/>
            <person name="Rieger M."/>
            <person name="Ansorge W."/>
            <person name="Unseld M."/>
            <person name="Fartmann B."/>
            <person name="Valle G."/>
            <person name="Bloecker H."/>
            <person name="Perez-Alonso M."/>
            <person name="Obermaier B."/>
            <person name="Delseny M."/>
            <person name="Boutry M."/>
            <person name="Grivell L.A."/>
            <person name="Mache R."/>
            <person name="Puigdomenech P."/>
            <person name="De Simone V."/>
            <person name="Choisne N."/>
            <person name="Artiguenave F."/>
            <person name="Robert C."/>
            <person name="Brottier P."/>
            <person name="Wincker P."/>
            <person name="Cattolico L."/>
            <person name="Weissenbach J."/>
            <person name="Saurin W."/>
            <person name="Quetier F."/>
            <person name="Schaefer M."/>
            <person name="Mueller-Auer S."/>
            <person name="Gabel C."/>
            <person name="Fuchs M."/>
            <person name="Benes V."/>
            <person name="Wurmbach E."/>
            <person name="Drzonek H."/>
            <person name="Erfle H."/>
            <person name="Jordan N."/>
            <person name="Bangert S."/>
            <person name="Wiedelmann R."/>
            <person name="Kranz H."/>
            <person name="Voss H."/>
            <person name="Holland R."/>
            <person name="Brandt P."/>
            <person name="Nyakatura G."/>
            <person name="Vezzi A."/>
            <person name="D'Angelo M."/>
            <person name="Pallavicini A."/>
            <person name="Toppo S."/>
            <person name="Simionati B."/>
            <person name="Conrad A."/>
            <person name="Hornischer K."/>
            <person name="Kauer G."/>
            <person name="Loehnert T.-H."/>
            <person name="Nordsiek G."/>
            <person name="Reichelt J."/>
            <person name="Scharfe M."/>
            <person name="Schoen O."/>
            <person name="Bargues M."/>
            <person name="Terol J."/>
            <person name="Climent J."/>
            <person name="Navarro P."/>
            <person name="Collado C."/>
            <person name="Perez-Perez A."/>
            <person name="Ottenwaelder B."/>
            <person name="Duchemin D."/>
            <person name="Cooke R."/>
            <person name="Laudie M."/>
            <person name="Berger-Llauro C."/>
            <person name="Purnelle B."/>
            <person name="Masuy D."/>
            <person name="de Haan M."/>
            <person name="Maarse A.C."/>
            <person name="Alcaraz J.-P."/>
            <person name="Cottet A."/>
            <person name="Casacuberta E."/>
            <person name="Monfort A."/>
            <person name="Argiriou A."/>
            <person name="Flores M."/>
            <person name="Liguori R."/>
            <person name="Vitale D."/>
            <person name="Mannhaupt G."/>
            <person name="Haase D."/>
            <person name="Schoof H."/>
            <person name="Rudd S."/>
            <person name="Zaccaria P."/>
            <person name="Mewes H.-W."/>
            <person name="Mayer K.F.X."/>
            <person name="Kaul S."/>
            <person name="Town C.D."/>
            <person name="Koo H.L."/>
            <person name="Tallon L.J."/>
            <person name="Jenkins J."/>
            <person name="Rooney T."/>
            <person name="Rizzo M."/>
            <person name="Walts A."/>
            <person name="Utterback T."/>
            <person name="Fujii C.Y."/>
            <person name="Shea T.P."/>
            <person name="Creasy T.H."/>
            <person name="Haas B."/>
            <person name="Maiti R."/>
            <person name="Wu D."/>
            <person name="Peterson J."/>
            <person name="Van Aken S."/>
            <person name="Pai G."/>
            <person name="Militscher J."/>
            <person name="Sellers P."/>
            <person name="Gill J.E."/>
            <person name="Feldblyum T.V."/>
            <person name="Preuss D."/>
            <person name="Lin X."/>
            <person name="Nierman W.C."/>
            <person name="Salzberg S.L."/>
            <person name="White O."/>
            <person name="Venter J.C."/>
            <person name="Fraser C.M."/>
            <person name="Kaneko T."/>
            <person name="Nakamura Y."/>
            <person name="Sato S."/>
            <person name="Kato T."/>
            <person name="Asamizu E."/>
            <person name="Sasamoto S."/>
            <person name="Kimura T."/>
            <person name="Idesawa K."/>
            <person name="Kawashima K."/>
            <person name="Kishida Y."/>
            <person name="Kiyokawa C."/>
            <person name="Kohara M."/>
            <person name="Matsumoto M."/>
            <person name="Matsuno A."/>
            <person name="Muraki A."/>
            <person name="Nakayama S."/>
            <person name="Nakazaki N."/>
            <person name="Shinpo S."/>
            <person name="Takeuchi C."/>
            <person name="Wada T."/>
            <person name="Watanabe A."/>
            <person name="Yamada M."/>
            <person name="Yasuda M."/>
            <person name="Tabata S."/>
        </authorList>
    </citation>
    <scope>NUCLEOTIDE SEQUENCE [LARGE SCALE GENOMIC DNA]</scope>
    <source>
        <strain>cv. Columbia</strain>
    </source>
</reference>
<reference key="2">
    <citation type="journal article" date="2017" name="Plant J.">
        <title>Araport11: a complete reannotation of the Arabidopsis thaliana reference genome.</title>
        <authorList>
            <person name="Cheng C.Y."/>
            <person name="Krishnakumar V."/>
            <person name="Chan A.P."/>
            <person name="Thibaud-Nissen F."/>
            <person name="Schobel S."/>
            <person name="Town C.D."/>
        </authorList>
    </citation>
    <scope>GENOME REANNOTATION</scope>
    <source>
        <strain>cv. Columbia</strain>
    </source>
</reference>
<reference key="3">
    <citation type="journal article" date="2003" name="Science">
        <title>Empirical analysis of transcriptional activity in the Arabidopsis genome.</title>
        <authorList>
            <person name="Yamada K."/>
            <person name="Lim J."/>
            <person name="Dale J.M."/>
            <person name="Chen H."/>
            <person name="Shinn P."/>
            <person name="Palm C.J."/>
            <person name="Southwick A.M."/>
            <person name="Wu H.C."/>
            <person name="Kim C.J."/>
            <person name="Nguyen M."/>
            <person name="Pham P.K."/>
            <person name="Cheuk R.F."/>
            <person name="Karlin-Newmann G."/>
            <person name="Liu S.X."/>
            <person name="Lam B."/>
            <person name="Sakano H."/>
            <person name="Wu T."/>
            <person name="Yu G."/>
            <person name="Miranda M."/>
            <person name="Quach H.L."/>
            <person name="Tripp M."/>
            <person name="Chang C.H."/>
            <person name="Lee J.M."/>
            <person name="Toriumi M.J."/>
            <person name="Chan M.M."/>
            <person name="Tang C.C."/>
            <person name="Onodera C.S."/>
            <person name="Deng J.M."/>
            <person name="Akiyama K."/>
            <person name="Ansari Y."/>
            <person name="Arakawa T."/>
            <person name="Banh J."/>
            <person name="Banno F."/>
            <person name="Bowser L."/>
            <person name="Brooks S.Y."/>
            <person name="Carninci P."/>
            <person name="Chao Q."/>
            <person name="Choy N."/>
            <person name="Enju A."/>
            <person name="Goldsmith A.D."/>
            <person name="Gurjal M."/>
            <person name="Hansen N.F."/>
            <person name="Hayashizaki Y."/>
            <person name="Johnson-Hopson C."/>
            <person name="Hsuan V.W."/>
            <person name="Iida K."/>
            <person name="Karnes M."/>
            <person name="Khan S."/>
            <person name="Koesema E."/>
            <person name="Ishida J."/>
            <person name="Jiang P.X."/>
            <person name="Jones T."/>
            <person name="Kawai J."/>
            <person name="Kamiya A."/>
            <person name="Meyers C."/>
            <person name="Nakajima M."/>
            <person name="Narusaka M."/>
            <person name="Seki M."/>
            <person name="Sakurai T."/>
            <person name="Satou M."/>
            <person name="Tamse R."/>
            <person name="Vaysberg M."/>
            <person name="Wallender E.K."/>
            <person name="Wong C."/>
            <person name="Yamamura Y."/>
            <person name="Yuan S."/>
            <person name="Shinozaki K."/>
            <person name="Davis R.W."/>
            <person name="Theologis A."/>
            <person name="Ecker J.R."/>
        </authorList>
    </citation>
    <scope>NUCLEOTIDE SEQUENCE [LARGE SCALE MRNA]</scope>
    <source>
        <strain>cv. Columbia</strain>
    </source>
</reference>
<reference key="4">
    <citation type="journal article" date="1993" name="Plant J.">
        <title>An inventory of 1152 expressed sequence tags obtained by partial sequencing of cDNAs from Arabidopsis thaliana.</title>
        <authorList>
            <person name="Hoefte H."/>
            <person name="Desprez T."/>
            <person name="Amselem J."/>
            <person name="Chiapello H."/>
            <person name="Rouze P."/>
            <person name="Caboche M."/>
            <person name="Moisan A."/>
            <person name="Jourjon M.-F."/>
            <person name="Charpenteau J.-L."/>
            <person name="Berthomieu P."/>
            <person name="Guerrier D."/>
            <person name="Giraudat J."/>
            <person name="Quigley F."/>
            <person name="Thomas F."/>
            <person name="Yu D.-Y."/>
            <person name="Mache R."/>
            <person name="Raynal M."/>
            <person name="Cooke R."/>
            <person name="Grellet F."/>
            <person name="Delseny M."/>
            <person name="Parmentier Y."/>
            <person name="de Marcillac G."/>
            <person name="Gigot C."/>
            <person name="Fleck J."/>
            <person name="Philipps G."/>
            <person name="Axelos M."/>
            <person name="Bardet C."/>
            <person name="Tremousaygue D."/>
            <person name="Lescure B."/>
        </authorList>
    </citation>
    <scope>NUCLEOTIDE SEQUENCE [LARGE SCALE MRNA] OF 45-151</scope>
    <source>
        <strain>cv. Columbia</strain>
        <tissue>Green siliques</tissue>
    </source>
</reference>
<reference key="5">
    <citation type="journal article" date="2001" name="Plant Physiol.">
        <title>The organization of cytoplasmic ribosomal protein genes in the Arabidopsis genome.</title>
        <authorList>
            <person name="Barakat A."/>
            <person name="Szick-Miranda K."/>
            <person name="Chang I.-F."/>
            <person name="Guyot R."/>
            <person name="Blanc G."/>
            <person name="Cooke R."/>
            <person name="Delseny M."/>
            <person name="Bailey-Serres J."/>
        </authorList>
    </citation>
    <scope>GENE FAMILY ORGANIZATION</scope>
    <scope>NOMENCLATURE</scope>
</reference>
<reference key="6">
    <citation type="journal article" date="2023" name="Plant Cell">
        <title>An updated nomenclature for plant ribosomal protein genes.</title>
        <authorList>
            <person name="Scarpin M.R."/>
            <person name="Busche M."/>
            <person name="Martinez R.E."/>
            <person name="Harper L.C."/>
            <person name="Reiser L."/>
            <person name="Szakonyi D."/>
            <person name="Merchante C."/>
            <person name="Lan T."/>
            <person name="Xiong W."/>
            <person name="Mo B."/>
            <person name="Tang G."/>
            <person name="Chen X."/>
            <person name="Bailey-Serres J."/>
            <person name="Browning K.S."/>
            <person name="Brunkard J.O."/>
        </authorList>
    </citation>
    <scope>NOMENCLATURE</scope>
</reference>
<comment type="similarity">
    <text evidence="2">Belongs to the universal ribosomal protein uS15 family.</text>
</comment>
<comment type="sequence caution" evidence="2">
    <conflict type="erroneous gene model prediction">
        <sequence resource="EMBL-CDS" id="CAB82681"/>
    </conflict>
</comment>
<gene>
    <name type="primary">RPS13A</name>
    <name type="ordered locus">At3g60770</name>
    <name type="ORF">T4C21_180</name>
</gene>
<name>RS131_ARATH</name>
<accession>P59223</accession>
<accession>P49203</accession>
<accession>Q93V69</accession>
<accession>Q93WJ4</accession>
<accession>Q9LZY6</accession>
<proteinExistence type="evidence at transcript level"/>
<evidence type="ECO:0000303" key="1">
    <source>
    </source>
</evidence>
<evidence type="ECO:0000305" key="2"/>
<feature type="chain" id="PRO_0000115680" description="Small ribosomal subunit protein uS15z">
    <location>
        <begin position="1"/>
        <end position="151"/>
    </location>
</feature>
<feature type="sequence conflict" description="In Ref. 3; AAK96445/AAK55664." evidence="2" ref="3">
    <original>Y</original>
    <variation>H</variation>
    <location>
        <position position="18"/>
    </location>
</feature>
<keyword id="KW-1185">Reference proteome</keyword>
<keyword id="KW-0687">Ribonucleoprotein</keyword>
<keyword id="KW-0689">Ribosomal protein</keyword>
<organism>
    <name type="scientific">Arabidopsis thaliana</name>
    <name type="common">Mouse-ear cress</name>
    <dbReference type="NCBI Taxonomy" id="3702"/>
    <lineage>
        <taxon>Eukaryota</taxon>
        <taxon>Viridiplantae</taxon>
        <taxon>Streptophyta</taxon>
        <taxon>Embryophyta</taxon>
        <taxon>Tracheophyta</taxon>
        <taxon>Spermatophyta</taxon>
        <taxon>Magnoliopsida</taxon>
        <taxon>eudicotyledons</taxon>
        <taxon>Gunneridae</taxon>
        <taxon>Pentapetalae</taxon>
        <taxon>rosids</taxon>
        <taxon>malvids</taxon>
        <taxon>Brassicales</taxon>
        <taxon>Brassicaceae</taxon>
        <taxon>Camelineae</taxon>
        <taxon>Arabidopsis</taxon>
    </lineage>
</organism>
<sequence length="151" mass="17095">MGRMHSRGKGISASALPYKRSSPSWLKTTPQDVDESICKFAKKGLTPSQIGVILRDSHGIPQVKSVTGSKILRILKAHGLAPEIPEDLYHLIKKAVAIRKHLERNRKDKDSKFRLILVESRIHRLARYYKKTKKLPPVWKYESTTASTLVA</sequence>
<dbReference type="EMBL" id="AL162295">
    <property type="protein sequence ID" value="CAB82681.1"/>
    <property type="status" value="ALT_SEQ"/>
    <property type="molecule type" value="Genomic_DNA"/>
</dbReference>
<dbReference type="EMBL" id="CP002686">
    <property type="protein sequence ID" value="AEE80106.1"/>
    <property type="molecule type" value="Genomic_DNA"/>
</dbReference>
<dbReference type="EMBL" id="AF380636">
    <property type="protein sequence ID" value="AAK55717.1"/>
    <property type="molecule type" value="mRNA"/>
</dbReference>
<dbReference type="EMBL" id="AY056088">
    <property type="protein sequence ID" value="AAL06976.1"/>
    <property type="molecule type" value="mRNA"/>
</dbReference>
<dbReference type="EMBL" id="AY090366">
    <property type="protein sequence ID" value="AAL91269.1"/>
    <property type="molecule type" value="mRNA"/>
</dbReference>
<dbReference type="EMBL" id="AY052731">
    <property type="protein sequence ID" value="AAK96445.1"/>
    <property type="molecule type" value="mRNA"/>
</dbReference>
<dbReference type="EMBL" id="AF378861">
    <property type="protein sequence ID" value="AAK55664.1"/>
    <property type="molecule type" value="mRNA"/>
</dbReference>
<dbReference type="EMBL" id="Z17784">
    <property type="protein sequence ID" value="CAA79066.1"/>
    <property type="molecule type" value="mRNA"/>
</dbReference>
<dbReference type="PIR" id="T47888">
    <property type="entry name" value="T47888"/>
</dbReference>
<dbReference type="RefSeq" id="NP_567104.1">
    <property type="nucleotide sequence ID" value="NM_115941.4"/>
</dbReference>
<dbReference type="SMR" id="P59223"/>
<dbReference type="BioGRID" id="10562">
    <property type="interactions" value="151"/>
</dbReference>
<dbReference type="FunCoup" id="P59223">
    <property type="interactions" value="3466"/>
</dbReference>
<dbReference type="IntAct" id="P59223">
    <property type="interactions" value="2"/>
</dbReference>
<dbReference type="STRING" id="3702.P59223"/>
<dbReference type="iPTMnet" id="P59223"/>
<dbReference type="PaxDb" id="3702-AT3G60770.1"/>
<dbReference type="ProteomicsDB" id="226902"/>
<dbReference type="EnsemblPlants" id="AT3G60770.1">
    <property type="protein sequence ID" value="AT3G60770.1"/>
    <property type="gene ID" value="AT3G60770"/>
</dbReference>
<dbReference type="GeneID" id="825248"/>
<dbReference type="Gramene" id="AT3G60770.1">
    <property type="protein sequence ID" value="AT3G60770.1"/>
    <property type="gene ID" value="AT3G60770"/>
</dbReference>
<dbReference type="KEGG" id="ath:AT3G60770"/>
<dbReference type="Araport" id="AT3G60770"/>
<dbReference type="TAIR" id="AT3G60770"/>
<dbReference type="eggNOG" id="KOG0400">
    <property type="taxonomic scope" value="Eukaryota"/>
</dbReference>
<dbReference type="HOGENOM" id="CLU_090139_2_0_1"/>
<dbReference type="InParanoid" id="P59223"/>
<dbReference type="OMA" id="AQICHRE"/>
<dbReference type="OrthoDB" id="1041134at2759"/>
<dbReference type="PhylomeDB" id="P59223"/>
<dbReference type="CD-CODE" id="4299E36E">
    <property type="entry name" value="Nucleolus"/>
</dbReference>
<dbReference type="PRO" id="PR:P59223"/>
<dbReference type="Proteomes" id="UP000006548">
    <property type="component" value="Chromosome 3"/>
</dbReference>
<dbReference type="ExpressionAtlas" id="P59223">
    <property type="expression patterns" value="baseline and differential"/>
</dbReference>
<dbReference type="GO" id="GO:0005829">
    <property type="term" value="C:cytosol"/>
    <property type="evidence" value="ECO:0007005"/>
    <property type="project" value="TAIR"/>
</dbReference>
<dbReference type="GO" id="GO:0022626">
    <property type="term" value="C:cytosolic ribosome"/>
    <property type="evidence" value="ECO:0007005"/>
    <property type="project" value="TAIR"/>
</dbReference>
<dbReference type="GO" id="GO:0022627">
    <property type="term" value="C:cytosolic small ribosomal subunit"/>
    <property type="evidence" value="ECO:0007005"/>
    <property type="project" value="TAIR"/>
</dbReference>
<dbReference type="GO" id="GO:0005730">
    <property type="term" value="C:nucleolus"/>
    <property type="evidence" value="ECO:0007005"/>
    <property type="project" value="TAIR"/>
</dbReference>
<dbReference type="GO" id="GO:0009505">
    <property type="term" value="C:plant-type cell wall"/>
    <property type="evidence" value="ECO:0007005"/>
    <property type="project" value="TAIR"/>
</dbReference>
<dbReference type="GO" id="GO:0003735">
    <property type="term" value="F:structural constituent of ribosome"/>
    <property type="evidence" value="ECO:0000314"/>
    <property type="project" value="CAFA"/>
</dbReference>
<dbReference type="GO" id="GO:0006412">
    <property type="term" value="P:translation"/>
    <property type="evidence" value="ECO:0007669"/>
    <property type="project" value="InterPro"/>
</dbReference>
<dbReference type="CDD" id="cd00353">
    <property type="entry name" value="Ribosomal_S15p_S13e"/>
    <property type="match status" value="1"/>
</dbReference>
<dbReference type="FunFam" id="1.10.287.10:FF:000003">
    <property type="entry name" value="40S ribosomal protein S13"/>
    <property type="match status" value="1"/>
</dbReference>
<dbReference type="FunFam" id="4.10.860.130:FF:000001">
    <property type="entry name" value="40S ribosomal protein S13"/>
    <property type="match status" value="1"/>
</dbReference>
<dbReference type="Gene3D" id="4.10.860.130">
    <property type="match status" value="1"/>
</dbReference>
<dbReference type="Gene3D" id="1.10.287.10">
    <property type="entry name" value="S15/NS1, RNA-binding"/>
    <property type="match status" value="1"/>
</dbReference>
<dbReference type="HAMAP" id="MF_01343_A">
    <property type="entry name" value="Ribosomal_uS15_A"/>
    <property type="match status" value="1"/>
</dbReference>
<dbReference type="InterPro" id="IPR000589">
    <property type="entry name" value="Ribosomal_uS15"/>
</dbReference>
<dbReference type="InterPro" id="IPR023029">
    <property type="entry name" value="Ribosomal_uS15_arc_euk"/>
</dbReference>
<dbReference type="InterPro" id="IPR012606">
    <property type="entry name" value="Ribosomal_uS15_N"/>
</dbReference>
<dbReference type="InterPro" id="IPR009068">
    <property type="entry name" value="uS15_NS1_RNA-bd_sf"/>
</dbReference>
<dbReference type="NCBIfam" id="NF006331">
    <property type="entry name" value="PRK08561.1"/>
    <property type="match status" value="1"/>
</dbReference>
<dbReference type="PANTHER" id="PTHR11885">
    <property type="entry name" value="RIBOSOMAL PROTEIN S15P/S13E"/>
    <property type="match status" value="1"/>
</dbReference>
<dbReference type="PANTHER" id="PTHR11885:SF25">
    <property type="entry name" value="SMALL RIBOSOMAL SUBUNIT PROTEIN US15Y-RELATED"/>
    <property type="match status" value="1"/>
</dbReference>
<dbReference type="Pfam" id="PF08069">
    <property type="entry name" value="Ribosomal_S13_N"/>
    <property type="match status" value="1"/>
</dbReference>
<dbReference type="Pfam" id="PF00312">
    <property type="entry name" value="Ribosomal_S15"/>
    <property type="match status" value="1"/>
</dbReference>
<dbReference type="SMART" id="SM01386">
    <property type="entry name" value="Ribosomal_S13_N"/>
    <property type="match status" value="1"/>
</dbReference>
<dbReference type="SMART" id="SM01387">
    <property type="entry name" value="Ribosomal_S15"/>
    <property type="match status" value="1"/>
</dbReference>
<dbReference type="SUPFAM" id="SSF47060">
    <property type="entry name" value="S15/NS1 RNA-binding domain"/>
    <property type="match status" value="1"/>
</dbReference>
<dbReference type="PROSITE" id="PS00362">
    <property type="entry name" value="RIBOSOMAL_S15"/>
    <property type="match status" value="1"/>
</dbReference>